<dbReference type="EMBL" id="CP002038">
    <property type="protein sequence ID" value="ADM98661.1"/>
    <property type="molecule type" value="Genomic_DNA"/>
</dbReference>
<dbReference type="RefSeq" id="WP_013318107.1">
    <property type="nucleotide sequence ID" value="NC_014500.1"/>
</dbReference>
<dbReference type="SMR" id="E0SDG9"/>
<dbReference type="STRING" id="198628.Dda3937_04154"/>
<dbReference type="KEGG" id="ddd:Dda3937_04154"/>
<dbReference type="PATRIC" id="fig|198628.6.peg.2441"/>
<dbReference type="eggNOG" id="COG2831">
    <property type="taxonomic scope" value="Bacteria"/>
</dbReference>
<dbReference type="HOGENOM" id="CLU_020581_4_1_6"/>
<dbReference type="OrthoDB" id="290122at2"/>
<dbReference type="Proteomes" id="UP000006859">
    <property type="component" value="Chromosome"/>
</dbReference>
<dbReference type="GO" id="GO:0009279">
    <property type="term" value="C:cell outer membrane"/>
    <property type="evidence" value="ECO:0007669"/>
    <property type="project" value="UniProtKB-SubCell"/>
</dbReference>
<dbReference type="GO" id="GO:0046930">
    <property type="term" value="C:pore complex"/>
    <property type="evidence" value="ECO:0007669"/>
    <property type="project" value="UniProtKB-KW"/>
</dbReference>
<dbReference type="GO" id="GO:0098046">
    <property type="term" value="C:type V protein secretion system complex"/>
    <property type="evidence" value="ECO:0007669"/>
    <property type="project" value="TreeGrafter"/>
</dbReference>
<dbReference type="GO" id="GO:0015288">
    <property type="term" value="F:porin activity"/>
    <property type="evidence" value="ECO:0007669"/>
    <property type="project" value="UniProtKB-KW"/>
</dbReference>
<dbReference type="GO" id="GO:0008320">
    <property type="term" value="F:protein transmembrane transporter activity"/>
    <property type="evidence" value="ECO:0007669"/>
    <property type="project" value="TreeGrafter"/>
</dbReference>
<dbReference type="GO" id="GO:0006811">
    <property type="term" value="P:monoatomic ion transport"/>
    <property type="evidence" value="ECO:0007669"/>
    <property type="project" value="UniProtKB-KW"/>
</dbReference>
<dbReference type="GO" id="GO:0046819">
    <property type="term" value="P:protein secretion by the type V secretion system"/>
    <property type="evidence" value="ECO:0007669"/>
    <property type="project" value="TreeGrafter"/>
</dbReference>
<dbReference type="Gene3D" id="3.10.20.310">
    <property type="entry name" value="membrane protein fhac"/>
    <property type="match status" value="1"/>
</dbReference>
<dbReference type="Gene3D" id="2.40.160.50">
    <property type="entry name" value="membrane protein fhac: a member of the omp85/tpsb transporter family"/>
    <property type="match status" value="1"/>
</dbReference>
<dbReference type="InterPro" id="IPR005565">
    <property type="entry name" value="Hemolysn_activator_HlyB_C"/>
</dbReference>
<dbReference type="InterPro" id="IPR013686">
    <property type="entry name" value="Polypept-transport_assoc_ShlB"/>
</dbReference>
<dbReference type="InterPro" id="IPR034746">
    <property type="entry name" value="POTRA"/>
</dbReference>
<dbReference type="InterPro" id="IPR035251">
    <property type="entry name" value="ShlB_POTRA"/>
</dbReference>
<dbReference type="InterPro" id="IPR027282">
    <property type="entry name" value="TPS"/>
</dbReference>
<dbReference type="InterPro" id="IPR051544">
    <property type="entry name" value="TPS_OM_transporter"/>
</dbReference>
<dbReference type="PANTHER" id="PTHR34597:SF3">
    <property type="entry name" value="OUTER MEMBRANE TRANSPORTER CDIB"/>
    <property type="match status" value="1"/>
</dbReference>
<dbReference type="PANTHER" id="PTHR34597">
    <property type="entry name" value="SLR1661 PROTEIN"/>
    <property type="match status" value="1"/>
</dbReference>
<dbReference type="Pfam" id="PF08479">
    <property type="entry name" value="POTRA_2"/>
    <property type="match status" value="1"/>
</dbReference>
<dbReference type="Pfam" id="PF17287">
    <property type="entry name" value="POTRA_3"/>
    <property type="match status" value="1"/>
</dbReference>
<dbReference type="Pfam" id="PF03865">
    <property type="entry name" value="ShlB"/>
    <property type="match status" value="1"/>
</dbReference>
<dbReference type="PIRSF" id="PIRSF029745">
    <property type="entry name" value="FhaC"/>
    <property type="match status" value="1"/>
</dbReference>
<dbReference type="PROSITE" id="PS51779">
    <property type="entry name" value="POTRA"/>
    <property type="match status" value="1"/>
</dbReference>
<gene>
    <name type="primary">cdiB</name>
    <name type="synonym">hecB</name>
    <name type="ordered locus">Dda3937_04154</name>
</gene>
<proteinExistence type="inferred from homology"/>
<reference key="1">
    <citation type="journal article" date="2011" name="J. Bacteriol.">
        <title>Genome sequence of the plant-pathogenic bacterium Dickeya dadantii 3937.</title>
        <authorList>
            <person name="Glasner J.D."/>
            <person name="Yang C.H."/>
            <person name="Reverchon S."/>
            <person name="Hugouvieux-Cotte-Pattat N."/>
            <person name="Condemine G."/>
            <person name="Bohin J.P."/>
            <person name="Van Gijsegem F."/>
            <person name="Yang S."/>
            <person name="Franza T."/>
            <person name="Expert D."/>
            <person name="Plunkett G. III"/>
            <person name="San Francisco M.J."/>
            <person name="Charkowski A.O."/>
            <person name="Py B."/>
            <person name="Bell K."/>
            <person name="Rauscher L."/>
            <person name="Rodriguez-Palenzuela P."/>
            <person name="Toussaint A."/>
            <person name="Holeva M.C."/>
            <person name="He S.Y."/>
            <person name="Douet V."/>
            <person name="Boccara M."/>
            <person name="Blanco C."/>
            <person name="Toth I."/>
            <person name="Anderson B.D."/>
            <person name="Biehl B.S."/>
            <person name="Mau B."/>
            <person name="Flynn S.M."/>
            <person name="Barras F."/>
            <person name="Lindeberg M."/>
            <person name="Birch P.R."/>
            <person name="Tsuyumu S."/>
            <person name="Shi X."/>
            <person name="Hibbing M."/>
            <person name="Yap M.N."/>
            <person name="Carpentier M."/>
            <person name="Dassa E."/>
            <person name="Umehara M."/>
            <person name="Kim J.F."/>
            <person name="Rusch M."/>
            <person name="Soni P."/>
            <person name="Mayhew G.F."/>
            <person name="Fouts D.E."/>
            <person name="Gill S.R."/>
            <person name="Blattner F.R."/>
            <person name="Keen N.T."/>
            <person name="Perna N.T."/>
        </authorList>
    </citation>
    <scope>NUCLEOTIDE SEQUENCE [LARGE SCALE GENOMIC DNA]</scope>
    <source>
        <strain>3937</strain>
    </source>
</reference>
<reference key="2">
    <citation type="journal article" date="2010" name="Nature">
        <title>A widespread family of polymorphic contact-dependent toxin delivery systems in bacteria.</title>
        <authorList>
            <person name="Aoki S.K."/>
            <person name="Diner E.J."/>
            <person name="de Roodenbeke C.T."/>
            <person name="Burgess B.R."/>
            <person name="Poole S.J."/>
            <person name="Braaten B.A."/>
            <person name="Jones A.M."/>
            <person name="Webb J.S."/>
            <person name="Hayes C.S."/>
            <person name="Cotter P.A."/>
            <person name="Low D.A."/>
        </authorList>
    </citation>
    <scope>FUNCTION</scope>
    <source>
        <strain>3937</strain>
    </source>
</reference>
<protein>
    <recommendedName>
        <fullName evidence="4">Outer membrane transporter CdiB</fullName>
    </recommendedName>
</protein>
<keyword id="KW-0998">Cell outer membrane</keyword>
<keyword id="KW-0175">Coiled coil</keyword>
<keyword id="KW-0406">Ion transport</keyword>
<keyword id="KW-0472">Membrane</keyword>
<keyword id="KW-0626">Porin</keyword>
<keyword id="KW-0653">Protein transport</keyword>
<keyword id="KW-1185">Reference proteome</keyword>
<keyword id="KW-0732">Signal</keyword>
<keyword id="KW-0812">Transmembrane</keyword>
<keyword id="KW-1134">Transmembrane beta strand</keyword>
<keyword id="KW-0813">Transport</keyword>
<feature type="signal peptide" evidence="1">
    <location>
        <begin position="1"/>
        <end position="25"/>
    </location>
</feature>
<feature type="chain" id="PRO_0000432082" description="Outer membrane transporter CdiB" evidence="1">
    <location>
        <begin position="26"/>
        <end position="558"/>
    </location>
</feature>
<feature type="domain" description="POTRA" evidence="2">
    <location>
        <begin position="76"/>
        <end position="151"/>
    </location>
</feature>
<feature type="coiled-coil region" evidence="1">
    <location>
        <begin position="34"/>
        <end position="62"/>
    </location>
</feature>
<comment type="function">
    <text evidence="5">Probable outer membrane protein component of a toxin-immunity protein module, which functions as a cellular contact-dependent growth inhibition (CDI) system. CDI modules allow bacteria to communicate with and inhibit the growth of closely related neighboring bacteria in a contact-dependent fashion. This protein may be required for secretion and assembly of the CdiA toxin.</text>
</comment>
<comment type="function">
    <text evidence="4">Probable member of a two partner secretion pathway (TPS) in which it mediates the secretion of CdiA.</text>
</comment>
<comment type="subcellular location">
    <subcellularLocation>
        <location evidence="5">Cell outer membrane</location>
    </subcellularLocation>
</comment>
<comment type="miscellaneous">
    <text evidence="3">There are 2 cdiBAI loci in this strain, this is locus 2.</text>
</comment>
<comment type="similarity">
    <text evidence="4">Belongs to the TPS (TC 1.B.20) family.</text>
</comment>
<evidence type="ECO:0000255" key="1"/>
<evidence type="ECO:0000255" key="2">
    <source>
        <dbReference type="PROSITE-ProRule" id="PRU01115"/>
    </source>
</evidence>
<evidence type="ECO:0000303" key="3">
    <source>
    </source>
</evidence>
<evidence type="ECO:0000305" key="4"/>
<evidence type="ECO:0000305" key="5">
    <source>
    </source>
</evidence>
<name>CDIB_DICD3</name>
<organism>
    <name type="scientific">Dickeya dadantii (strain 3937)</name>
    <name type="common">Erwinia chrysanthemi (strain 3937)</name>
    <dbReference type="NCBI Taxonomy" id="198628"/>
    <lineage>
        <taxon>Bacteria</taxon>
        <taxon>Pseudomonadati</taxon>
        <taxon>Pseudomonadota</taxon>
        <taxon>Gammaproteobacteria</taxon>
        <taxon>Enterobacterales</taxon>
        <taxon>Pectobacteriaceae</taxon>
        <taxon>Dickeya</taxon>
    </lineage>
</organism>
<sequence length="558" mass="62320">MFVSSRKTGLIVCFSLIGYTASAFSASLNPAERNETQQRQSEVIEQSRQQREALQQLNNIVQAPLKADNALQGPCFTLREIRFNHSTLLGQRDQTALTAGYLNRCNNLEQINQLMHDVSNWYIQRGYITSRAFLSEQDLSGGVLQLEILEGRLEKITINNQTERMTRTAFPAREGEILNLRDIEQGMEQMNRMPSQQVTIEILPGSQPGYSVVNLTREAHLPFTGGVTFDNSGQKSTGEQQLNGSLALDNLFGVADQWFISAGHSSRFATSHDAESLQAGFSMPYGYWNLGYSYSQSRYRNTFISRDFPWHSTGDSDTHRLSLSRVVFRNGTMKTAIVGMLSQRTGNNYLNGTLLPSSSRKLSSVSLGVNHSQKLWGGLATFNPTYNRGVRWLGAETDTDKSADEPRAEFNKWTLSASYYYPLTDSITYLGSLYGQYSARALYGSEQMTLGGESSVRGFREQYTSGNRGAYWRNELNWQAWQLPVLGNVTFMAAVDGGHLYNHKQDDSTAASLWGGAVGVTVASRWLSQQVTVGWPISYPAWLQPDTVVVGYRVGLSF</sequence>
<accession>E0SDG9</accession>